<organism>
    <name type="scientific">Streptococcus pneumoniae (strain JJA)</name>
    <dbReference type="NCBI Taxonomy" id="488222"/>
    <lineage>
        <taxon>Bacteria</taxon>
        <taxon>Bacillati</taxon>
        <taxon>Bacillota</taxon>
        <taxon>Bacilli</taxon>
        <taxon>Lactobacillales</taxon>
        <taxon>Streptococcaceae</taxon>
        <taxon>Streptococcus</taxon>
    </lineage>
</organism>
<proteinExistence type="inferred from homology"/>
<sequence>MELEVFAGQEKSELSMIEVARAILELRGRDHEMHFSDLVNEIQNYLGTSNSDIREALPLFYTELNFDGSFISLGDNKWGLRSWYGVDEIDEEIIALEENDDDEVAPKAKKKRVNAFMDGDSDAIDYNADDPEDEDAYEADPALSYDDENPDDEKNEVEAYDAEINEIAPDDLGEDVDLNEDDDEFSDDDAETSEE</sequence>
<protein>
    <recommendedName>
        <fullName evidence="1">Probable DNA-directed RNA polymerase subunit delta</fullName>
    </recommendedName>
    <alternativeName>
        <fullName evidence="1">RNAP delta factor</fullName>
    </alternativeName>
</protein>
<feature type="chain" id="PRO_1000133453" description="Probable DNA-directed RNA polymerase subunit delta">
    <location>
        <begin position="1"/>
        <end position="195"/>
    </location>
</feature>
<feature type="domain" description="HTH HARE-type" evidence="2">
    <location>
        <begin position="14"/>
        <end position="83"/>
    </location>
</feature>
<feature type="region of interest" description="Disordered" evidence="3">
    <location>
        <begin position="120"/>
        <end position="195"/>
    </location>
</feature>
<feature type="compositionally biased region" description="Acidic residues" evidence="3">
    <location>
        <begin position="120"/>
        <end position="138"/>
    </location>
</feature>
<feature type="compositionally biased region" description="Acidic residues" evidence="3">
    <location>
        <begin position="145"/>
        <end position="195"/>
    </location>
</feature>
<comment type="function">
    <text evidence="1">Participates in both the initiation and recycling phases of transcription. In the presence of the delta subunit, RNAP displays an increased specificity of transcription, a decreased affinity for nucleic acids, and an increased efficiency of RNA synthesis because of enhanced recycling.</text>
</comment>
<comment type="subunit">
    <text evidence="1">RNAP is composed of a core of 2 alpha, a beta and a beta' subunits. The core is associated with a delta subunit and one of several sigma factors.</text>
</comment>
<comment type="similarity">
    <text evidence="1">Belongs to the RpoE family.</text>
</comment>
<reference key="1">
    <citation type="journal article" date="2010" name="Genome Biol.">
        <title>Structure and dynamics of the pan-genome of Streptococcus pneumoniae and closely related species.</title>
        <authorList>
            <person name="Donati C."/>
            <person name="Hiller N.L."/>
            <person name="Tettelin H."/>
            <person name="Muzzi A."/>
            <person name="Croucher N.J."/>
            <person name="Angiuoli S.V."/>
            <person name="Oggioni M."/>
            <person name="Dunning Hotopp J.C."/>
            <person name="Hu F.Z."/>
            <person name="Riley D.R."/>
            <person name="Covacci A."/>
            <person name="Mitchell T.J."/>
            <person name="Bentley S.D."/>
            <person name="Kilian M."/>
            <person name="Ehrlich G.D."/>
            <person name="Rappuoli R."/>
            <person name="Moxon E.R."/>
            <person name="Masignani V."/>
        </authorList>
    </citation>
    <scope>NUCLEOTIDE SEQUENCE [LARGE SCALE GENOMIC DNA]</scope>
    <source>
        <strain>JJA</strain>
    </source>
</reference>
<accession>C1CCN9</accession>
<gene>
    <name evidence="1" type="primary">rpoE</name>
    <name type="ordered locus">SPJ_0462</name>
</gene>
<evidence type="ECO:0000255" key="1">
    <source>
        <dbReference type="HAMAP-Rule" id="MF_00357"/>
    </source>
</evidence>
<evidence type="ECO:0000255" key="2">
    <source>
        <dbReference type="PROSITE-ProRule" id="PRU01261"/>
    </source>
</evidence>
<evidence type="ECO:0000256" key="3">
    <source>
        <dbReference type="SAM" id="MobiDB-lite"/>
    </source>
</evidence>
<name>RPOE_STRZJ</name>
<dbReference type="EMBL" id="CP000919">
    <property type="protein sequence ID" value="ACO18443.1"/>
    <property type="molecule type" value="Genomic_DNA"/>
</dbReference>
<dbReference type="RefSeq" id="WP_000418402.1">
    <property type="nucleotide sequence ID" value="NC_012466.1"/>
</dbReference>
<dbReference type="SMR" id="C1CCN9"/>
<dbReference type="GeneID" id="45652070"/>
<dbReference type="KEGG" id="sjj:SPJ_0462"/>
<dbReference type="HOGENOM" id="CLU_116648_0_0_9"/>
<dbReference type="Proteomes" id="UP000002206">
    <property type="component" value="Chromosome"/>
</dbReference>
<dbReference type="GO" id="GO:0000428">
    <property type="term" value="C:DNA-directed RNA polymerase complex"/>
    <property type="evidence" value="ECO:0007669"/>
    <property type="project" value="UniProtKB-KW"/>
</dbReference>
<dbReference type="GO" id="GO:0003899">
    <property type="term" value="F:DNA-directed RNA polymerase activity"/>
    <property type="evidence" value="ECO:0007669"/>
    <property type="project" value="UniProtKB-UniRule"/>
</dbReference>
<dbReference type="GO" id="GO:0006351">
    <property type="term" value="P:DNA-templated transcription"/>
    <property type="evidence" value="ECO:0007669"/>
    <property type="project" value="InterPro"/>
</dbReference>
<dbReference type="GO" id="GO:0006355">
    <property type="term" value="P:regulation of DNA-templated transcription"/>
    <property type="evidence" value="ECO:0007669"/>
    <property type="project" value="UniProtKB-UniRule"/>
</dbReference>
<dbReference type="Gene3D" id="1.10.10.1250">
    <property type="entry name" value="RNA polymerase, subunit delta, N-terminal domain"/>
    <property type="match status" value="1"/>
</dbReference>
<dbReference type="HAMAP" id="MF_00357">
    <property type="entry name" value="RNApol_bact_RpoE"/>
    <property type="match status" value="1"/>
</dbReference>
<dbReference type="InterPro" id="IPR007759">
    <property type="entry name" value="Asxl_HARE-HTH"/>
</dbReference>
<dbReference type="InterPro" id="IPR038087">
    <property type="entry name" value="RNAP_delta_N_dom_sf"/>
</dbReference>
<dbReference type="InterPro" id="IPR029757">
    <property type="entry name" value="RpoE"/>
</dbReference>
<dbReference type="NCBIfam" id="TIGR04567">
    <property type="entry name" value="RNAP_delt_lowGC"/>
    <property type="match status" value="1"/>
</dbReference>
<dbReference type="Pfam" id="PF05066">
    <property type="entry name" value="HARE-HTH"/>
    <property type="match status" value="1"/>
</dbReference>
<dbReference type="PROSITE" id="PS51913">
    <property type="entry name" value="HTH_HARE"/>
    <property type="match status" value="1"/>
</dbReference>
<keyword id="KW-0240">DNA-directed RNA polymerase</keyword>
<keyword id="KW-0548">Nucleotidyltransferase</keyword>
<keyword id="KW-0804">Transcription</keyword>
<keyword id="KW-0808">Transferase</keyword>